<sequence length="210" mass="24248">MNKGVFVVIEGVDGAGKTALIEGFKKLYPTKFLNYQLTYTREPGGTLLAEKIRQLLLNETMEPLTEAYLFAAARTEHISKLIKPAIEKEQLVISDRFVFSSFAYQGLSKKIGIDTVKQINHHALRNMMPNFTFILDCNFKEALQRMQKRGNDNLLDEFIKGKNDFDTVRSYYLSLVDKKNCFLINGDNKQEHLEKFIELLTRCLQQPTHY</sequence>
<keyword id="KW-0067">ATP-binding</keyword>
<keyword id="KW-0418">Kinase</keyword>
<keyword id="KW-0545">Nucleotide biosynthesis</keyword>
<keyword id="KW-0547">Nucleotide-binding</keyword>
<keyword id="KW-1185">Reference proteome</keyword>
<keyword id="KW-0808">Transferase</keyword>
<name>KTHY_MYCGE</name>
<dbReference type="EC" id="2.7.4.9"/>
<dbReference type="EMBL" id="L43967">
    <property type="protein sequence ID" value="AAC71222.1"/>
    <property type="molecule type" value="Genomic_DNA"/>
</dbReference>
<dbReference type="PIR" id="F64200">
    <property type="entry name" value="F64200"/>
</dbReference>
<dbReference type="RefSeq" id="WP_009885557.1">
    <property type="nucleotide sequence ID" value="NC_000908.2"/>
</dbReference>
<dbReference type="SMR" id="P47252"/>
<dbReference type="FunCoup" id="P47252">
    <property type="interactions" value="151"/>
</dbReference>
<dbReference type="STRING" id="243273.MG_006"/>
<dbReference type="GeneID" id="88282121"/>
<dbReference type="KEGG" id="mge:MG_006"/>
<dbReference type="eggNOG" id="COG0125">
    <property type="taxonomic scope" value="Bacteria"/>
</dbReference>
<dbReference type="HOGENOM" id="CLU_049131_0_2_14"/>
<dbReference type="InParanoid" id="P47252"/>
<dbReference type="OrthoDB" id="9774907at2"/>
<dbReference type="BioCyc" id="MGEN243273:G1GJ2-6-MONOMER"/>
<dbReference type="Proteomes" id="UP000000807">
    <property type="component" value="Chromosome"/>
</dbReference>
<dbReference type="GO" id="GO:0005737">
    <property type="term" value="C:cytoplasm"/>
    <property type="evidence" value="ECO:0000318"/>
    <property type="project" value="GO_Central"/>
</dbReference>
<dbReference type="GO" id="GO:0005829">
    <property type="term" value="C:cytosol"/>
    <property type="evidence" value="ECO:0000318"/>
    <property type="project" value="GO_Central"/>
</dbReference>
<dbReference type="GO" id="GO:0005524">
    <property type="term" value="F:ATP binding"/>
    <property type="evidence" value="ECO:0007669"/>
    <property type="project" value="UniProtKB-UniRule"/>
</dbReference>
<dbReference type="GO" id="GO:0004798">
    <property type="term" value="F:dTMP kinase activity"/>
    <property type="evidence" value="ECO:0000318"/>
    <property type="project" value="GO_Central"/>
</dbReference>
<dbReference type="GO" id="GO:0006233">
    <property type="term" value="P:dTDP biosynthetic process"/>
    <property type="evidence" value="ECO:0000318"/>
    <property type="project" value="GO_Central"/>
</dbReference>
<dbReference type="GO" id="GO:0006235">
    <property type="term" value="P:dTTP biosynthetic process"/>
    <property type="evidence" value="ECO:0000318"/>
    <property type="project" value="GO_Central"/>
</dbReference>
<dbReference type="GO" id="GO:0006227">
    <property type="term" value="P:dUDP biosynthetic process"/>
    <property type="evidence" value="ECO:0000318"/>
    <property type="project" value="GO_Central"/>
</dbReference>
<dbReference type="CDD" id="cd01672">
    <property type="entry name" value="TMPK"/>
    <property type="match status" value="1"/>
</dbReference>
<dbReference type="FunFam" id="3.40.50.300:FF:000225">
    <property type="entry name" value="Thymidylate kinase"/>
    <property type="match status" value="1"/>
</dbReference>
<dbReference type="Gene3D" id="3.40.50.300">
    <property type="entry name" value="P-loop containing nucleotide triphosphate hydrolases"/>
    <property type="match status" value="1"/>
</dbReference>
<dbReference type="HAMAP" id="MF_00165">
    <property type="entry name" value="Thymidylate_kinase"/>
    <property type="match status" value="1"/>
</dbReference>
<dbReference type="InterPro" id="IPR027417">
    <property type="entry name" value="P-loop_NTPase"/>
</dbReference>
<dbReference type="InterPro" id="IPR039430">
    <property type="entry name" value="Thymidylate_kin-like_dom"/>
</dbReference>
<dbReference type="InterPro" id="IPR018095">
    <property type="entry name" value="Thymidylate_kin_CS"/>
</dbReference>
<dbReference type="InterPro" id="IPR018094">
    <property type="entry name" value="Thymidylate_kinase"/>
</dbReference>
<dbReference type="NCBIfam" id="TIGR00041">
    <property type="entry name" value="DTMP_kinase"/>
    <property type="match status" value="1"/>
</dbReference>
<dbReference type="PANTHER" id="PTHR10344">
    <property type="entry name" value="THYMIDYLATE KINASE"/>
    <property type="match status" value="1"/>
</dbReference>
<dbReference type="PANTHER" id="PTHR10344:SF4">
    <property type="entry name" value="UMP-CMP KINASE 2, MITOCHONDRIAL"/>
    <property type="match status" value="1"/>
</dbReference>
<dbReference type="Pfam" id="PF02223">
    <property type="entry name" value="Thymidylate_kin"/>
    <property type="match status" value="1"/>
</dbReference>
<dbReference type="SUPFAM" id="SSF52540">
    <property type="entry name" value="P-loop containing nucleoside triphosphate hydrolases"/>
    <property type="match status" value="1"/>
</dbReference>
<dbReference type="PROSITE" id="PS01331">
    <property type="entry name" value="THYMIDYLATE_KINASE"/>
    <property type="match status" value="1"/>
</dbReference>
<gene>
    <name type="primary">tmk</name>
    <name type="ordered locus">MG006</name>
</gene>
<accession>P47252</accession>
<protein>
    <recommendedName>
        <fullName>Thymidylate kinase</fullName>
        <ecNumber>2.7.4.9</ecNumber>
    </recommendedName>
    <alternativeName>
        <fullName>dTMP kinase</fullName>
    </alternativeName>
</protein>
<comment type="function">
    <text evidence="1">Phosphorylation of dTMP to form dTDP in both de novo and salvage pathways of dTTP synthesis.</text>
</comment>
<comment type="catalytic activity">
    <reaction>
        <text>dTMP + ATP = dTDP + ADP</text>
        <dbReference type="Rhea" id="RHEA:13517"/>
        <dbReference type="ChEBI" id="CHEBI:30616"/>
        <dbReference type="ChEBI" id="CHEBI:58369"/>
        <dbReference type="ChEBI" id="CHEBI:63528"/>
        <dbReference type="ChEBI" id="CHEBI:456216"/>
        <dbReference type="EC" id="2.7.4.9"/>
    </reaction>
</comment>
<comment type="similarity">
    <text evidence="3">Belongs to the thymidylate kinase family.</text>
</comment>
<proteinExistence type="inferred from homology"/>
<feature type="chain" id="PRO_0000155302" description="Thymidylate kinase">
    <location>
        <begin position="1"/>
        <end position="210"/>
    </location>
</feature>
<feature type="binding site" evidence="2">
    <location>
        <begin position="11"/>
        <end position="18"/>
    </location>
    <ligand>
        <name>ATP</name>
        <dbReference type="ChEBI" id="CHEBI:30616"/>
    </ligand>
</feature>
<reference key="1">
    <citation type="journal article" date="1995" name="Science">
        <title>The minimal gene complement of Mycoplasma genitalium.</title>
        <authorList>
            <person name="Fraser C.M."/>
            <person name="Gocayne J.D."/>
            <person name="White O."/>
            <person name="Adams M.D."/>
            <person name="Clayton R.A."/>
            <person name="Fleischmann R.D."/>
            <person name="Bult C.J."/>
            <person name="Kerlavage A.R."/>
            <person name="Sutton G.G."/>
            <person name="Kelley J.M."/>
            <person name="Fritchman J.L."/>
            <person name="Weidman J.F."/>
            <person name="Small K.V."/>
            <person name="Sandusky M."/>
            <person name="Fuhrmann J.L."/>
            <person name="Nguyen D.T."/>
            <person name="Utterback T.R."/>
            <person name="Saudek D.M."/>
            <person name="Phillips C.A."/>
            <person name="Merrick J.M."/>
            <person name="Tomb J.-F."/>
            <person name="Dougherty B.A."/>
            <person name="Bott K.F."/>
            <person name="Hu P.-C."/>
            <person name="Lucier T.S."/>
            <person name="Peterson S.N."/>
            <person name="Smith H.O."/>
            <person name="Hutchison C.A. III"/>
            <person name="Venter J.C."/>
        </authorList>
    </citation>
    <scope>NUCLEOTIDE SEQUENCE [LARGE SCALE GENOMIC DNA]</scope>
    <source>
        <strain>ATCC 33530 / DSM 19775 / NCTC 10195 / G37</strain>
    </source>
</reference>
<organism>
    <name type="scientific">Mycoplasma genitalium (strain ATCC 33530 / DSM 19775 / NCTC 10195 / G37)</name>
    <name type="common">Mycoplasmoides genitalium</name>
    <dbReference type="NCBI Taxonomy" id="243273"/>
    <lineage>
        <taxon>Bacteria</taxon>
        <taxon>Bacillati</taxon>
        <taxon>Mycoplasmatota</taxon>
        <taxon>Mycoplasmoidales</taxon>
        <taxon>Mycoplasmoidaceae</taxon>
        <taxon>Mycoplasmoides</taxon>
    </lineage>
</organism>
<evidence type="ECO:0000250" key="1"/>
<evidence type="ECO:0000255" key="2"/>
<evidence type="ECO:0000305" key="3"/>